<feature type="chain" id="PRO_0000053027" description="Hemoglobin subunit beta-3">
    <location>
        <begin position="1"/>
        <end position="147"/>
    </location>
</feature>
<feature type="domain" description="Globin" evidence="1">
    <location>
        <begin position="2"/>
        <end position="147"/>
    </location>
</feature>
<feature type="binding site" description="distal binding residue">
    <location>
        <position position="63"/>
    </location>
    <ligand>
        <name>heme b</name>
        <dbReference type="ChEBI" id="CHEBI:60344"/>
    </ligand>
    <ligandPart>
        <name>Fe</name>
        <dbReference type="ChEBI" id="CHEBI:18248"/>
    </ligandPart>
</feature>
<feature type="binding site" description="proximal binding residue">
    <location>
        <position position="92"/>
    </location>
    <ligand>
        <name>heme b</name>
        <dbReference type="ChEBI" id="CHEBI:60344"/>
    </ligand>
    <ligandPart>
        <name>Fe</name>
        <dbReference type="ChEBI" id="CHEBI:18248"/>
    </ligandPart>
</feature>
<sequence length="147" mass="16577">VEWTDAERTAILTLWKKINIDEIGPCAMRRLLIVSPWTQRHFSTFGNISTNAAIMDNDLVAKHGSTVMGGLDRAIKNMDDIKGAYRELSKKHSDQLHVDPDNFRLLAECITLCVAGKFGPKEFTADVHEAWYKFLAAVTSALSRQYH</sequence>
<comment type="function">
    <text>Involved in oxygen transport from gills to the various peripheral tissues.</text>
</comment>
<comment type="subunit">
    <text>Heterotetramer of two alpha chains and two beta chains.</text>
</comment>
<comment type="tissue specificity">
    <text>Red blood cells.</text>
</comment>
<comment type="similarity">
    <text evidence="1">Belongs to the globin family.</text>
</comment>
<gene>
    <name type="primary">hbb3</name>
</gene>
<keyword id="KW-0903">Direct protein sequencing</keyword>
<keyword id="KW-0349">Heme</keyword>
<keyword id="KW-0408">Iron</keyword>
<keyword id="KW-0479">Metal-binding</keyword>
<keyword id="KW-0561">Oxygen transport</keyword>
<keyword id="KW-0813">Transport</keyword>
<evidence type="ECO:0000255" key="1">
    <source>
        <dbReference type="PROSITE-ProRule" id="PRU00238"/>
    </source>
</evidence>
<name>HBB3_MURHE</name>
<accession>Q7LZC1</accession>
<proteinExistence type="evidence at protein level"/>
<protein>
    <recommendedName>
        <fullName>Hemoglobin subunit beta-3</fullName>
    </recommendedName>
    <alternativeName>
        <fullName>Beta-3-globin</fullName>
    </alternativeName>
    <alternativeName>
        <fullName>Hemoglobin beta-3 chain</fullName>
    </alternativeName>
    <alternativeName>
        <fullName>Hemoglobin beta-III chain</fullName>
    </alternativeName>
</protein>
<dbReference type="PIR" id="S67982">
    <property type="entry name" value="S67982"/>
</dbReference>
<dbReference type="SMR" id="Q7LZC1"/>
<dbReference type="GO" id="GO:0072562">
    <property type="term" value="C:blood microparticle"/>
    <property type="evidence" value="ECO:0007669"/>
    <property type="project" value="TreeGrafter"/>
</dbReference>
<dbReference type="GO" id="GO:0031838">
    <property type="term" value="C:haptoglobin-hemoglobin complex"/>
    <property type="evidence" value="ECO:0007669"/>
    <property type="project" value="TreeGrafter"/>
</dbReference>
<dbReference type="GO" id="GO:0005833">
    <property type="term" value="C:hemoglobin complex"/>
    <property type="evidence" value="ECO:0007669"/>
    <property type="project" value="InterPro"/>
</dbReference>
<dbReference type="GO" id="GO:0031720">
    <property type="term" value="F:haptoglobin binding"/>
    <property type="evidence" value="ECO:0007669"/>
    <property type="project" value="TreeGrafter"/>
</dbReference>
<dbReference type="GO" id="GO:0020037">
    <property type="term" value="F:heme binding"/>
    <property type="evidence" value="ECO:0007669"/>
    <property type="project" value="InterPro"/>
</dbReference>
<dbReference type="GO" id="GO:0046872">
    <property type="term" value="F:metal ion binding"/>
    <property type="evidence" value="ECO:0007669"/>
    <property type="project" value="UniProtKB-KW"/>
</dbReference>
<dbReference type="GO" id="GO:0043177">
    <property type="term" value="F:organic acid binding"/>
    <property type="evidence" value="ECO:0007669"/>
    <property type="project" value="TreeGrafter"/>
</dbReference>
<dbReference type="GO" id="GO:0019825">
    <property type="term" value="F:oxygen binding"/>
    <property type="evidence" value="ECO:0007669"/>
    <property type="project" value="InterPro"/>
</dbReference>
<dbReference type="GO" id="GO:0005344">
    <property type="term" value="F:oxygen carrier activity"/>
    <property type="evidence" value="ECO:0007669"/>
    <property type="project" value="UniProtKB-KW"/>
</dbReference>
<dbReference type="GO" id="GO:0004601">
    <property type="term" value="F:peroxidase activity"/>
    <property type="evidence" value="ECO:0007669"/>
    <property type="project" value="TreeGrafter"/>
</dbReference>
<dbReference type="GO" id="GO:0042744">
    <property type="term" value="P:hydrogen peroxide catabolic process"/>
    <property type="evidence" value="ECO:0007669"/>
    <property type="project" value="TreeGrafter"/>
</dbReference>
<dbReference type="CDD" id="cd08925">
    <property type="entry name" value="Hb-beta-like"/>
    <property type="match status" value="1"/>
</dbReference>
<dbReference type="Gene3D" id="1.10.490.10">
    <property type="entry name" value="Globins"/>
    <property type="match status" value="1"/>
</dbReference>
<dbReference type="InterPro" id="IPR000971">
    <property type="entry name" value="Globin"/>
</dbReference>
<dbReference type="InterPro" id="IPR009050">
    <property type="entry name" value="Globin-like_sf"/>
</dbReference>
<dbReference type="InterPro" id="IPR012292">
    <property type="entry name" value="Globin/Proto"/>
</dbReference>
<dbReference type="InterPro" id="IPR002337">
    <property type="entry name" value="Hemoglobin_b"/>
</dbReference>
<dbReference type="InterPro" id="IPR050056">
    <property type="entry name" value="Hemoglobin_oxygen_transport"/>
</dbReference>
<dbReference type="PANTHER" id="PTHR11442">
    <property type="entry name" value="HEMOGLOBIN FAMILY MEMBER"/>
    <property type="match status" value="1"/>
</dbReference>
<dbReference type="PANTHER" id="PTHR11442:SF102">
    <property type="entry name" value="HEMOGLOBIN SUBUNIT BETA-1-RELATED"/>
    <property type="match status" value="1"/>
</dbReference>
<dbReference type="Pfam" id="PF00042">
    <property type="entry name" value="Globin"/>
    <property type="match status" value="1"/>
</dbReference>
<dbReference type="PRINTS" id="PR00814">
    <property type="entry name" value="BETAHAEM"/>
</dbReference>
<dbReference type="SUPFAM" id="SSF46458">
    <property type="entry name" value="Globin-like"/>
    <property type="match status" value="1"/>
</dbReference>
<dbReference type="PROSITE" id="PS01033">
    <property type="entry name" value="GLOBIN"/>
    <property type="match status" value="1"/>
</dbReference>
<organism>
    <name type="scientific">Muraena helena</name>
    <name type="common">Mediterranean moray</name>
    <dbReference type="NCBI Taxonomy" id="46662"/>
    <lineage>
        <taxon>Eukaryota</taxon>
        <taxon>Metazoa</taxon>
        <taxon>Chordata</taxon>
        <taxon>Craniata</taxon>
        <taxon>Vertebrata</taxon>
        <taxon>Euteleostomi</taxon>
        <taxon>Actinopterygii</taxon>
        <taxon>Neopterygii</taxon>
        <taxon>Teleostei</taxon>
        <taxon>Anguilliformes</taxon>
        <taxon>Muraenidae</taxon>
        <taxon>Muraena</taxon>
    </lineage>
</organism>
<reference key="1">
    <citation type="journal article" date="1995" name="Eur. J. Biochem.">
        <title>Structure/function relationships in the hemoglobin components from moray (Muraena helena).</title>
        <authorList>
            <person name="Pellegrini M."/>
            <person name="Giardina B."/>
            <person name="Olianas A."/>
            <person name="Sanna M.T."/>
            <person name="Deiana A.M."/>
            <person name="Salvadori S."/>
            <person name="di Prisco G."/>
            <person name="Tamburrini M."/>
            <person name="Corda M."/>
        </authorList>
    </citation>
    <scope>PROTEIN SEQUENCE</scope>
</reference>